<sequence length="328" mass="34458">MSWLNTKKASCWRSSGRSATKSVTTNDAGTGNPAEQPARGAKQQPATETSRAGRDLRAAIVVGLSIGLVLIAVLVFVPRVWVAIVAVATLVATHEVVRRLREAGYLIPVIPLLIGGQAAVWLTWPFGAVGALAGFGGMVVVCMIWRLFMQDSVTRPTTGGAPSPGNYLSDVSATVFLAVWVPLFCSFGAMLVYPENGSGWVFCMMIAVIASDVGGYAVGVLFGKHPMVPTISPKKSWEGFAGSLVCGITATIITATFLVGKTPWIGALLGVLFVLTTALGDLVESQVKRDLGIKDMGRLLPGHGGLMDRLDGILPSAVAAWIVLTLLP</sequence>
<reference key="1">
    <citation type="journal article" date="1998" name="Nature">
        <title>Deciphering the biology of Mycobacterium tuberculosis from the complete genome sequence.</title>
        <authorList>
            <person name="Cole S.T."/>
            <person name="Brosch R."/>
            <person name="Parkhill J."/>
            <person name="Garnier T."/>
            <person name="Churcher C.M."/>
            <person name="Harris D.E."/>
            <person name="Gordon S.V."/>
            <person name="Eiglmeier K."/>
            <person name="Gas S."/>
            <person name="Barry C.E. III"/>
            <person name="Tekaia F."/>
            <person name="Badcock K."/>
            <person name="Basham D."/>
            <person name="Brown D."/>
            <person name="Chillingworth T."/>
            <person name="Connor R."/>
            <person name="Davies R.M."/>
            <person name="Devlin K."/>
            <person name="Feltwell T."/>
            <person name="Gentles S."/>
            <person name="Hamlin N."/>
            <person name="Holroyd S."/>
            <person name="Hornsby T."/>
            <person name="Jagels K."/>
            <person name="Krogh A."/>
            <person name="McLean J."/>
            <person name="Moule S."/>
            <person name="Murphy L.D."/>
            <person name="Oliver S."/>
            <person name="Osborne J."/>
            <person name="Quail M.A."/>
            <person name="Rajandream M.A."/>
            <person name="Rogers J."/>
            <person name="Rutter S."/>
            <person name="Seeger K."/>
            <person name="Skelton S."/>
            <person name="Squares S."/>
            <person name="Squares R."/>
            <person name="Sulston J.E."/>
            <person name="Taylor K."/>
            <person name="Whitehead S."/>
            <person name="Barrell B.G."/>
        </authorList>
    </citation>
    <scope>NUCLEOTIDE SEQUENCE [LARGE SCALE GENOMIC DNA]</scope>
    <source>
        <strain>ATCC 25618 / H37Rv</strain>
    </source>
</reference>
<reference key="2">
    <citation type="journal article" date="2022" name="Genomics">
        <title>Deep N-terminomics of Mycobacterium tuberculosis H37Rv extensively correct annotated encoding genes.</title>
        <authorList>
            <person name="Shi J."/>
            <person name="Meng S."/>
            <person name="Wan L."/>
            <person name="Zhang Z."/>
            <person name="Jiang S."/>
            <person name="Zhu H."/>
            <person name="Dai E."/>
            <person name="Chang L."/>
            <person name="Gao H."/>
            <person name="Wan K."/>
            <person name="Zhang L."/>
            <person name="Zhao X."/>
            <person name="Liu H."/>
            <person name="Lyu Z."/>
            <person name="Zhang Y."/>
            <person name="Xu P."/>
        </authorList>
    </citation>
    <scope>PROTEIN SEQUENCE OF 22-39</scope>
    <scope>SEQUENCE REVISION TO N-TERMINUS</scope>
    <source>
        <strain>H37Rv</strain>
    </source>
</reference>
<reference key="3">
    <citation type="journal article" date="2011" name="Mol. Cell. Proteomics">
        <title>Proteogenomic analysis of Mycobacterium tuberculosis by high resolution mass spectrometry.</title>
        <authorList>
            <person name="Kelkar D.S."/>
            <person name="Kumar D."/>
            <person name="Kumar P."/>
            <person name="Balakrishnan L."/>
            <person name="Muthusamy B."/>
            <person name="Yadav A.K."/>
            <person name="Shrivastava P."/>
            <person name="Marimuthu A."/>
            <person name="Anand S."/>
            <person name="Sundaram H."/>
            <person name="Kingsbury R."/>
            <person name="Harsha H.C."/>
            <person name="Nair B."/>
            <person name="Prasad T.S."/>
            <person name="Chauhan D.S."/>
            <person name="Katoch K."/>
            <person name="Katoch V.M."/>
            <person name="Kumar P."/>
            <person name="Chaerkady R."/>
            <person name="Ramachandran S."/>
            <person name="Dash D."/>
            <person name="Pandey A."/>
        </authorList>
    </citation>
    <scope>ACETYLATION [LARGE SCALE ANALYSIS] AT THR-2 (ISOFORM 2)</scope>
    <scope>CLEAVAGE OF INITIATOR METHIONINE [LARGE SCALE ANALYSIS] (ISOFORM 2)</scope>
    <scope>IDENTIFICATION BY MASS SPECTROMETRY [LARGE SCALE ANALYSIS]</scope>
    <source>
        <strain>ATCC 25618 / H37Rv</strain>
    </source>
</reference>
<comment type="catalytic activity">
    <reaction>
        <text>a 1,2-diacyl-sn-glycero-3-phosphate + CTP + H(+) = a CDP-1,2-diacyl-sn-glycerol + diphosphate</text>
        <dbReference type="Rhea" id="RHEA:16229"/>
        <dbReference type="ChEBI" id="CHEBI:15378"/>
        <dbReference type="ChEBI" id="CHEBI:33019"/>
        <dbReference type="ChEBI" id="CHEBI:37563"/>
        <dbReference type="ChEBI" id="CHEBI:58332"/>
        <dbReference type="ChEBI" id="CHEBI:58608"/>
        <dbReference type="EC" id="2.7.7.41"/>
    </reaction>
</comment>
<comment type="pathway">
    <text>Phospholipid metabolism; CDP-diacylglycerol biosynthesis; CDP-diacylglycerol from sn-glycerol 3-phosphate: step 3/3.</text>
</comment>
<comment type="subcellular location">
    <subcellularLocation>
        <location evidence="1">Cell membrane</location>
        <topology evidence="1">Multi-pass membrane protein</topology>
    </subcellularLocation>
</comment>
<comment type="alternative products">
    <event type="alternative initiation"/>
    <isoform>
        <id>P9WPF7-1</id>
        <name>1</name>
        <sequence type="displayed"/>
    </isoform>
    <isoform>
        <id>P9WPF7-2</id>
        <name>2</name>
        <sequence type="described" ref="VSP_059173 VSP_059174"/>
    </isoform>
</comment>
<comment type="miscellaneous">
    <molecule>Isoform 2</molecule>
    <text evidence="5">Starts at GUG codon.</text>
</comment>
<comment type="similarity">
    <text evidence="5">Belongs to the CDS family.</text>
</comment>
<comment type="sequence caution" evidence="3 4">
    <conflict type="erroneous initiation">
        <sequence resource="EMBL-CDS" id="CCP45683"/>
    </conflict>
    <text>Truncated N-terminus.</text>
</comment>
<feature type="chain" id="PRO_0000090743" description="Phosphatidate cytidylyltransferase">
    <location>
        <begin position="1"/>
        <end position="328"/>
    </location>
</feature>
<feature type="transmembrane region" description="Helical" evidence="1">
    <location>
        <begin position="58"/>
        <end position="78"/>
    </location>
</feature>
<feature type="transmembrane region" description="Helical" evidence="1">
    <location>
        <begin position="81"/>
        <end position="97"/>
    </location>
</feature>
<feature type="transmembrane region" description="Helical" evidence="1">
    <location>
        <begin position="103"/>
        <end position="123"/>
    </location>
</feature>
<feature type="transmembrane region" description="Helical" evidence="1">
    <location>
        <begin position="124"/>
        <end position="144"/>
    </location>
</feature>
<feature type="transmembrane region" description="Helical" evidence="1">
    <location>
        <begin position="173"/>
        <end position="193"/>
    </location>
</feature>
<feature type="transmembrane region" description="Helical" evidence="1">
    <location>
        <begin position="202"/>
        <end position="222"/>
    </location>
</feature>
<feature type="transmembrane region" description="Helical" evidence="1">
    <location>
        <begin position="239"/>
        <end position="259"/>
    </location>
</feature>
<feature type="transmembrane region" description="Helical" evidence="1">
    <location>
        <begin position="263"/>
        <end position="283"/>
    </location>
</feature>
<feature type="region of interest" description="Disordered" evidence="2">
    <location>
        <begin position="15"/>
        <end position="50"/>
    </location>
</feature>
<feature type="compositionally biased region" description="Polar residues" evidence="2">
    <location>
        <begin position="15"/>
        <end position="29"/>
    </location>
</feature>
<feature type="splice variant" id="VSP_059173" description="In isoform 2.">
    <location>
        <begin position="1"/>
        <end position="22"/>
    </location>
</feature>
<feature type="splice variant" id="VSP_059174" description="In isoform 2.">
    <original>V</original>
    <variation>M</variation>
    <location>
        <position position="23"/>
    </location>
</feature>
<feature type="initiator methionine" description="Removed" evidence="6">
    <location sequence="P9WPF7-2">
        <position position="1"/>
    </location>
</feature>
<feature type="modified residue" description="N-acetylthreonine" evidence="6">
    <location sequence="P9WPF7-2">
        <position position="2"/>
    </location>
</feature>
<proteinExistence type="evidence at protein level"/>
<keyword id="KW-0007">Acetylation</keyword>
<keyword id="KW-0024">Alternative initiation</keyword>
<keyword id="KW-1003">Cell membrane</keyword>
<keyword id="KW-0903">Direct protein sequencing</keyword>
<keyword id="KW-0444">Lipid biosynthesis</keyword>
<keyword id="KW-0443">Lipid metabolism</keyword>
<keyword id="KW-0472">Membrane</keyword>
<keyword id="KW-0548">Nucleotidyltransferase</keyword>
<keyword id="KW-0594">Phospholipid biosynthesis</keyword>
<keyword id="KW-1208">Phospholipid metabolism</keyword>
<keyword id="KW-1185">Reference proteome</keyword>
<keyword id="KW-0808">Transferase</keyword>
<keyword id="KW-0812">Transmembrane</keyword>
<keyword id="KW-1133">Transmembrane helix</keyword>
<protein>
    <recommendedName>
        <fullName>Phosphatidate cytidylyltransferase</fullName>
        <ecNumber>2.7.7.41</ecNumber>
    </recommendedName>
    <alternativeName>
        <fullName>CDP-DAG synthase</fullName>
    </alternativeName>
    <alternativeName>
        <fullName>CDP-DG synthase</fullName>
    </alternativeName>
    <alternativeName>
        <fullName>CDP-diacylglycerol synthase</fullName>
        <shortName>CDS</shortName>
    </alternativeName>
    <alternativeName>
        <fullName>CDP-diglyceride pyrophosphorylase</fullName>
    </alternativeName>
    <alternativeName>
        <fullName>CDP-diglyceride synthase</fullName>
    </alternativeName>
    <alternativeName>
        <fullName>CTP:phosphatidate cytidylyltransferase</fullName>
    </alternativeName>
</protein>
<gene>
    <name type="primary">cdsA</name>
    <name type="ordered locus">Rv2881c</name>
    <name type="ORF">MTCY274.12c</name>
</gene>
<name>CDSA_MYCTU</name>
<evidence type="ECO:0000255" key="1"/>
<evidence type="ECO:0000256" key="2">
    <source>
        <dbReference type="SAM" id="MobiDB-lite"/>
    </source>
</evidence>
<evidence type="ECO:0000269" key="3">
    <source>
    </source>
</evidence>
<evidence type="ECO:0000269" key="4">
    <source>
    </source>
</evidence>
<evidence type="ECO:0000305" key="5"/>
<evidence type="ECO:0007744" key="6">
    <source>
    </source>
</evidence>
<accession>P9WPF7</accession>
<accession>L0TDN0</accession>
<accession>P63758</accession>
<accession>Q10807</accession>
<organism>
    <name type="scientific">Mycobacterium tuberculosis (strain ATCC 25618 / H37Rv)</name>
    <dbReference type="NCBI Taxonomy" id="83332"/>
    <lineage>
        <taxon>Bacteria</taxon>
        <taxon>Bacillati</taxon>
        <taxon>Actinomycetota</taxon>
        <taxon>Actinomycetes</taxon>
        <taxon>Mycobacteriales</taxon>
        <taxon>Mycobacteriaceae</taxon>
        <taxon>Mycobacterium</taxon>
        <taxon>Mycobacterium tuberculosis complex</taxon>
    </lineage>
</organism>
<dbReference type="EC" id="2.7.7.41"/>
<dbReference type="EMBL" id="AL123456">
    <property type="protein sequence ID" value="CCP45683.1"/>
    <property type="status" value="ALT_INIT"/>
    <property type="molecule type" value="Genomic_DNA"/>
</dbReference>
<dbReference type="PIR" id="D70924">
    <property type="entry name" value="D70924"/>
</dbReference>
<dbReference type="RefSeq" id="NP_217397.1">
    <molecule id="P9WPF7-2"/>
    <property type="nucleotide sequence ID" value="NC_000962.3"/>
</dbReference>
<dbReference type="SMR" id="P9WPF7"/>
<dbReference type="FunCoup" id="P9WPF7">
    <property type="interactions" value="59"/>
</dbReference>
<dbReference type="STRING" id="83332.Rv2881c"/>
<dbReference type="iPTMnet" id="P9WPF7"/>
<dbReference type="PaxDb" id="83332-Rv2881c"/>
<dbReference type="DNASU" id="888910"/>
<dbReference type="GeneID" id="888910"/>
<dbReference type="KEGG" id="mtu:Rv2881c"/>
<dbReference type="TubercuList" id="Rv2881c"/>
<dbReference type="eggNOG" id="COG4589">
    <property type="taxonomic scope" value="Bacteria"/>
</dbReference>
<dbReference type="InParanoid" id="P9WPF7"/>
<dbReference type="OMA" id="FGKHPMA"/>
<dbReference type="OrthoDB" id="9799199at2"/>
<dbReference type="UniPathway" id="UPA00557">
    <property type="reaction ID" value="UER00614"/>
</dbReference>
<dbReference type="Proteomes" id="UP000001584">
    <property type="component" value="Chromosome"/>
</dbReference>
<dbReference type="GO" id="GO:0009274">
    <property type="term" value="C:peptidoglycan-based cell wall"/>
    <property type="evidence" value="ECO:0007005"/>
    <property type="project" value="MTBBASE"/>
</dbReference>
<dbReference type="GO" id="GO:0005886">
    <property type="term" value="C:plasma membrane"/>
    <property type="evidence" value="ECO:0000318"/>
    <property type="project" value="GO_Central"/>
</dbReference>
<dbReference type="GO" id="GO:0004605">
    <property type="term" value="F:phosphatidate cytidylyltransferase activity"/>
    <property type="evidence" value="ECO:0000318"/>
    <property type="project" value="GO_Central"/>
</dbReference>
<dbReference type="GO" id="GO:0016024">
    <property type="term" value="P:CDP-diacylglycerol biosynthetic process"/>
    <property type="evidence" value="ECO:0000318"/>
    <property type="project" value="GO_Central"/>
</dbReference>
<dbReference type="InterPro" id="IPR000374">
    <property type="entry name" value="PC_trans"/>
</dbReference>
<dbReference type="PANTHER" id="PTHR46382">
    <property type="entry name" value="PHOSPHATIDATE CYTIDYLYLTRANSFERASE"/>
    <property type="match status" value="1"/>
</dbReference>
<dbReference type="PANTHER" id="PTHR46382:SF1">
    <property type="entry name" value="PHOSPHATIDATE CYTIDYLYLTRANSFERASE"/>
    <property type="match status" value="1"/>
</dbReference>
<dbReference type="Pfam" id="PF01148">
    <property type="entry name" value="CTP_transf_1"/>
    <property type="match status" value="1"/>
</dbReference>
<dbReference type="PROSITE" id="PS01315">
    <property type="entry name" value="CDS"/>
    <property type="match status" value="1"/>
</dbReference>